<protein>
    <recommendedName>
        <fullName evidence="1">Small ribosomal subunit protein uS11</fullName>
    </recommendedName>
    <alternativeName>
        <fullName evidence="3">30S ribosomal protein S11</fullName>
    </alternativeName>
</protein>
<feature type="chain" id="PRO_0000294805" description="Small ribosomal subunit protein uS11">
    <location>
        <begin position="1"/>
        <end position="134"/>
    </location>
</feature>
<feature type="region of interest" description="Disordered" evidence="2">
    <location>
        <begin position="115"/>
        <end position="134"/>
    </location>
</feature>
<feature type="compositionally biased region" description="Basic residues" evidence="2">
    <location>
        <begin position="124"/>
        <end position="134"/>
    </location>
</feature>
<gene>
    <name evidence="1" type="primary">rpsK</name>
    <name type="ordered locus">MMOB2600</name>
</gene>
<proteinExistence type="inferred from homology"/>
<evidence type="ECO:0000255" key="1">
    <source>
        <dbReference type="HAMAP-Rule" id="MF_01310"/>
    </source>
</evidence>
<evidence type="ECO:0000256" key="2">
    <source>
        <dbReference type="SAM" id="MobiDB-lite"/>
    </source>
</evidence>
<evidence type="ECO:0000305" key="3"/>
<sequence>MAVKKTKSKQKVKRKNIVSGVAHIHSTHQNTIVAFSDEAGNVFAWSSAGAIGYKGTKKKTPYAAGLATTAAVEKAKEHGLKEVRVELKGTGSGKDAARKQIEALGIIIKEVKDVTPIPHNGTRPPKKVLKRDLK</sequence>
<comment type="function">
    <text evidence="1">Located on the platform of the 30S subunit, it bridges several disparate RNA helices of the 16S rRNA. Forms part of the Shine-Dalgarno cleft in the 70S ribosome.</text>
</comment>
<comment type="subunit">
    <text evidence="1">Part of the 30S ribosomal subunit. Interacts with proteins S7 and S18. Binds to IF-3.</text>
</comment>
<comment type="similarity">
    <text evidence="1">Belongs to the universal ribosomal protein uS11 family.</text>
</comment>
<keyword id="KW-1185">Reference proteome</keyword>
<keyword id="KW-0687">Ribonucleoprotein</keyword>
<keyword id="KW-0689">Ribosomal protein</keyword>
<keyword id="KW-0694">RNA-binding</keyword>
<keyword id="KW-0699">rRNA-binding</keyword>
<dbReference type="EMBL" id="AE017308">
    <property type="protein sequence ID" value="AAT27746.1"/>
    <property type="molecule type" value="Genomic_DNA"/>
</dbReference>
<dbReference type="RefSeq" id="WP_011264780.1">
    <property type="nucleotide sequence ID" value="NC_006908.1"/>
</dbReference>
<dbReference type="SMR" id="Q6KI30"/>
<dbReference type="STRING" id="267748.MMOB2600"/>
<dbReference type="KEGG" id="mmo:MMOB2600"/>
<dbReference type="eggNOG" id="COG0100">
    <property type="taxonomic scope" value="Bacteria"/>
</dbReference>
<dbReference type="HOGENOM" id="CLU_072439_5_0_14"/>
<dbReference type="OrthoDB" id="9806415at2"/>
<dbReference type="Proteomes" id="UP000009072">
    <property type="component" value="Chromosome"/>
</dbReference>
<dbReference type="GO" id="GO:1990904">
    <property type="term" value="C:ribonucleoprotein complex"/>
    <property type="evidence" value="ECO:0007669"/>
    <property type="project" value="UniProtKB-KW"/>
</dbReference>
<dbReference type="GO" id="GO:0005840">
    <property type="term" value="C:ribosome"/>
    <property type="evidence" value="ECO:0007669"/>
    <property type="project" value="UniProtKB-KW"/>
</dbReference>
<dbReference type="GO" id="GO:0019843">
    <property type="term" value="F:rRNA binding"/>
    <property type="evidence" value="ECO:0007669"/>
    <property type="project" value="UniProtKB-UniRule"/>
</dbReference>
<dbReference type="GO" id="GO:0003735">
    <property type="term" value="F:structural constituent of ribosome"/>
    <property type="evidence" value="ECO:0007669"/>
    <property type="project" value="InterPro"/>
</dbReference>
<dbReference type="GO" id="GO:0006412">
    <property type="term" value="P:translation"/>
    <property type="evidence" value="ECO:0007669"/>
    <property type="project" value="UniProtKB-UniRule"/>
</dbReference>
<dbReference type="Gene3D" id="3.30.420.80">
    <property type="entry name" value="Ribosomal protein S11"/>
    <property type="match status" value="1"/>
</dbReference>
<dbReference type="HAMAP" id="MF_01310">
    <property type="entry name" value="Ribosomal_uS11"/>
    <property type="match status" value="1"/>
</dbReference>
<dbReference type="InterPro" id="IPR001971">
    <property type="entry name" value="Ribosomal_uS11"/>
</dbReference>
<dbReference type="InterPro" id="IPR019981">
    <property type="entry name" value="Ribosomal_uS11_bac-type"/>
</dbReference>
<dbReference type="InterPro" id="IPR018102">
    <property type="entry name" value="Ribosomal_uS11_CS"/>
</dbReference>
<dbReference type="InterPro" id="IPR036967">
    <property type="entry name" value="Ribosomal_uS11_sf"/>
</dbReference>
<dbReference type="NCBIfam" id="NF003698">
    <property type="entry name" value="PRK05309.1"/>
    <property type="match status" value="1"/>
</dbReference>
<dbReference type="NCBIfam" id="TIGR03632">
    <property type="entry name" value="uS11_bact"/>
    <property type="match status" value="1"/>
</dbReference>
<dbReference type="PANTHER" id="PTHR11759">
    <property type="entry name" value="40S RIBOSOMAL PROTEIN S14/30S RIBOSOMAL PROTEIN S11"/>
    <property type="match status" value="1"/>
</dbReference>
<dbReference type="Pfam" id="PF00411">
    <property type="entry name" value="Ribosomal_S11"/>
    <property type="match status" value="1"/>
</dbReference>
<dbReference type="PIRSF" id="PIRSF002131">
    <property type="entry name" value="Ribosomal_S11"/>
    <property type="match status" value="1"/>
</dbReference>
<dbReference type="SUPFAM" id="SSF53137">
    <property type="entry name" value="Translational machinery components"/>
    <property type="match status" value="1"/>
</dbReference>
<dbReference type="PROSITE" id="PS00054">
    <property type="entry name" value="RIBOSOMAL_S11"/>
    <property type="match status" value="1"/>
</dbReference>
<accession>Q6KI30</accession>
<reference key="1">
    <citation type="journal article" date="2004" name="Genome Res.">
        <title>The complete genome and proteome of Mycoplasma mobile.</title>
        <authorList>
            <person name="Jaffe J.D."/>
            <person name="Stange-Thomann N."/>
            <person name="Smith C."/>
            <person name="DeCaprio D."/>
            <person name="Fisher S."/>
            <person name="Butler J."/>
            <person name="Calvo S."/>
            <person name="Elkins T."/>
            <person name="FitzGerald M.G."/>
            <person name="Hafez N."/>
            <person name="Kodira C.D."/>
            <person name="Major J."/>
            <person name="Wang S."/>
            <person name="Wilkinson J."/>
            <person name="Nicol R."/>
            <person name="Nusbaum C."/>
            <person name="Birren B."/>
            <person name="Berg H.C."/>
            <person name="Church G.M."/>
        </authorList>
    </citation>
    <scope>NUCLEOTIDE SEQUENCE [LARGE SCALE GENOMIC DNA]</scope>
    <source>
        <strain>ATCC 43663 / NCTC 11711 / 163 K</strain>
    </source>
</reference>
<name>RS11_MYCM1</name>
<organism>
    <name type="scientific">Mycoplasma mobile (strain ATCC 43663 / 163K / NCTC 11711)</name>
    <name type="common">Mesomycoplasma mobile</name>
    <dbReference type="NCBI Taxonomy" id="267748"/>
    <lineage>
        <taxon>Bacteria</taxon>
        <taxon>Bacillati</taxon>
        <taxon>Mycoplasmatota</taxon>
        <taxon>Mycoplasmoidales</taxon>
        <taxon>Metamycoplasmataceae</taxon>
        <taxon>Mesomycoplasma</taxon>
    </lineage>
</organism>